<reference key="1">
    <citation type="journal article" date="2006" name="Comp. Biochem. Physiol.">
        <title>Comparison of the partial proteomes of the venoms of Brazilian spiders of the genus Phoneutria.</title>
        <authorList>
            <person name="Richardson M."/>
            <person name="Pimenta A.M."/>
            <person name="Bemquerer M.P."/>
            <person name="Santoro M.M."/>
            <person name="Beirao P.S."/>
            <person name="Lima M.E."/>
            <person name="Figueiredo S.G."/>
            <person name="Bloch C. Jr."/>
            <person name="Vasconcelos E.A."/>
            <person name="Campos F.A."/>
            <person name="Gomes P.C."/>
            <person name="Cordeiro M.N."/>
        </authorList>
    </citation>
    <scope>PROTEIN SEQUENCE</scope>
    <scope>SUBCELLULAR LOCATION</scope>
    <scope>MASS SPECTROMETRY</scope>
    <source>
        <tissue>Venom</tissue>
    </source>
</reference>
<reference key="2">
    <citation type="submission" date="2004-06" db="UniProtKB">
        <title>New peptide PN10C5 from venom of Brazilian armed spider Phoneutria nigriventer has sequence similarities with snake disintegrins, vasotocin-neurophysins and other spider toxins.</title>
        <authorList>
            <person name="Richardson M."/>
            <person name="Pimenta A.M.C."/>
            <person name="Bemquerer M.P."/>
            <person name="Santoro M.M."/>
            <person name="Figueiredo S.G."/>
            <person name="Cordeiro M.N."/>
        </authorList>
    </citation>
    <scope>FUNCTION</scope>
</reference>
<feature type="peptide" id="PRO_0000044979" description="U23-ctenitoxin-Pn1a" evidence="2">
    <location>
        <begin position="1"/>
        <end position="33"/>
    </location>
</feature>
<feature type="disulfide bond" evidence="1">
    <location>
        <begin position="3"/>
        <end position="16"/>
    </location>
</feature>
<feature type="disulfide bond" evidence="1">
    <location>
        <begin position="10"/>
        <end position="21"/>
    </location>
</feature>
<feature type="disulfide bond" evidence="1">
    <location>
        <begin position="15"/>
        <end position="30"/>
    </location>
</feature>
<dbReference type="SMR" id="P84015"/>
<dbReference type="ArachnoServer" id="AS000297">
    <property type="toxin name" value="U23-ctenitoxin-Pn1a"/>
</dbReference>
<dbReference type="GO" id="GO:0005576">
    <property type="term" value="C:extracellular region"/>
    <property type="evidence" value="ECO:0007669"/>
    <property type="project" value="UniProtKB-SubCell"/>
</dbReference>
<comment type="function">
    <text evidence="3">Non-toxic to mice.</text>
</comment>
<comment type="subcellular location">
    <subcellularLocation>
        <location evidence="2">Secreted</location>
    </subcellularLocation>
</comment>
<comment type="tissue specificity">
    <text evidence="2">Expressed by the venom gland.</text>
</comment>
<comment type="domain">
    <text evidence="1">The presence of a 'disulfide through disulfide knot' structurally defines this protein as a knottin.</text>
</comment>
<comment type="mass spectrometry"/>
<comment type="similarity">
    <text evidence="5">Belongs to the neurotoxin 33 family.</text>
</comment>
<name>TXC5_PHONI</name>
<evidence type="ECO:0000250" key="1">
    <source>
        <dbReference type="UniProtKB" id="P86269"/>
    </source>
</evidence>
<evidence type="ECO:0000269" key="2">
    <source>
    </source>
</evidence>
<evidence type="ECO:0000269" key="3">
    <source ref="2"/>
</evidence>
<evidence type="ECO:0000303" key="4">
    <source ref="2"/>
</evidence>
<evidence type="ECO:0000305" key="5"/>
<organism>
    <name type="scientific">Phoneutria nigriventer</name>
    <name type="common">Brazilian armed spider</name>
    <name type="synonym">Ctenus nigriventer</name>
    <dbReference type="NCBI Taxonomy" id="6918"/>
    <lineage>
        <taxon>Eukaryota</taxon>
        <taxon>Metazoa</taxon>
        <taxon>Ecdysozoa</taxon>
        <taxon>Arthropoda</taxon>
        <taxon>Chelicerata</taxon>
        <taxon>Arachnida</taxon>
        <taxon>Araneae</taxon>
        <taxon>Araneomorphae</taxon>
        <taxon>Entelegynae</taxon>
        <taxon>Lycosoidea</taxon>
        <taxon>Ctenidae</taxon>
        <taxon>Phoneutria</taxon>
    </lineage>
</organism>
<proteinExistence type="evidence at protein level"/>
<sequence>GFCAQKGIKCHDIHCCTNLKCVREGSNRVCRKA</sequence>
<protein>
    <recommendedName>
        <fullName evidence="5">U23-ctenitoxin-Pn1a</fullName>
        <shortName evidence="5">U23-CNTX-Pn1a</shortName>
    </recommendedName>
    <alternativeName>
        <fullName evidence="4">Venom protein PN10C5</fullName>
    </alternativeName>
</protein>
<accession>P84015</accession>
<keyword id="KW-0903">Direct protein sequencing</keyword>
<keyword id="KW-1015">Disulfide bond</keyword>
<keyword id="KW-0960">Knottin</keyword>
<keyword id="KW-0964">Secreted</keyword>